<name>PLY13_ARATH</name>
<gene>
    <name type="primary">PMR6</name>
    <name type="ordered locus">At3g54920</name>
    <name type="ORF">F28P10_100</name>
</gene>
<accession>Q93Z04</accession>
<accession>Q9SV40</accession>
<reference key="1">
    <citation type="journal article" date="2002" name="Plant Cell">
        <title>PMR6, a pectate lyase-like gene required for powdery mildew susceptibility in Arabidopsis.</title>
        <authorList>
            <person name="Vogel J.P."/>
            <person name="Raab T.K."/>
            <person name="Schiff C."/>
            <person name="Somerville S.C."/>
        </authorList>
    </citation>
    <scope>NUCLEOTIDE SEQUENCE [MRNA]</scope>
    <scope>FUNCTION</scope>
    <scope>TISSUE SPECIFICITY</scope>
    <scope>MUTAGENESIS OF GLY-140 AND PRO-339</scope>
</reference>
<reference key="2">
    <citation type="journal article" date="2000" name="Nature">
        <title>Sequence and analysis of chromosome 3 of the plant Arabidopsis thaliana.</title>
        <authorList>
            <person name="Salanoubat M."/>
            <person name="Lemcke K."/>
            <person name="Rieger M."/>
            <person name="Ansorge W."/>
            <person name="Unseld M."/>
            <person name="Fartmann B."/>
            <person name="Valle G."/>
            <person name="Bloecker H."/>
            <person name="Perez-Alonso M."/>
            <person name="Obermaier B."/>
            <person name="Delseny M."/>
            <person name="Boutry M."/>
            <person name="Grivell L.A."/>
            <person name="Mache R."/>
            <person name="Puigdomenech P."/>
            <person name="De Simone V."/>
            <person name="Choisne N."/>
            <person name="Artiguenave F."/>
            <person name="Robert C."/>
            <person name="Brottier P."/>
            <person name="Wincker P."/>
            <person name="Cattolico L."/>
            <person name="Weissenbach J."/>
            <person name="Saurin W."/>
            <person name="Quetier F."/>
            <person name="Schaefer M."/>
            <person name="Mueller-Auer S."/>
            <person name="Gabel C."/>
            <person name="Fuchs M."/>
            <person name="Benes V."/>
            <person name="Wurmbach E."/>
            <person name="Drzonek H."/>
            <person name="Erfle H."/>
            <person name="Jordan N."/>
            <person name="Bangert S."/>
            <person name="Wiedelmann R."/>
            <person name="Kranz H."/>
            <person name="Voss H."/>
            <person name="Holland R."/>
            <person name="Brandt P."/>
            <person name="Nyakatura G."/>
            <person name="Vezzi A."/>
            <person name="D'Angelo M."/>
            <person name="Pallavicini A."/>
            <person name="Toppo S."/>
            <person name="Simionati B."/>
            <person name="Conrad A."/>
            <person name="Hornischer K."/>
            <person name="Kauer G."/>
            <person name="Loehnert T.-H."/>
            <person name="Nordsiek G."/>
            <person name="Reichelt J."/>
            <person name="Scharfe M."/>
            <person name="Schoen O."/>
            <person name="Bargues M."/>
            <person name="Terol J."/>
            <person name="Climent J."/>
            <person name="Navarro P."/>
            <person name="Collado C."/>
            <person name="Perez-Perez A."/>
            <person name="Ottenwaelder B."/>
            <person name="Duchemin D."/>
            <person name="Cooke R."/>
            <person name="Laudie M."/>
            <person name="Berger-Llauro C."/>
            <person name="Purnelle B."/>
            <person name="Masuy D."/>
            <person name="de Haan M."/>
            <person name="Maarse A.C."/>
            <person name="Alcaraz J.-P."/>
            <person name="Cottet A."/>
            <person name="Casacuberta E."/>
            <person name="Monfort A."/>
            <person name="Argiriou A."/>
            <person name="Flores M."/>
            <person name="Liguori R."/>
            <person name="Vitale D."/>
            <person name="Mannhaupt G."/>
            <person name="Haase D."/>
            <person name="Schoof H."/>
            <person name="Rudd S."/>
            <person name="Zaccaria P."/>
            <person name="Mewes H.-W."/>
            <person name="Mayer K.F.X."/>
            <person name="Kaul S."/>
            <person name="Town C.D."/>
            <person name="Koo H.L."/>
            <person name="Tallon L.J."/>
            <person name="Jenkins J."/>
            <person name="Rooney T."/>
            <person name="Rizzo M."/>
            <person name="Walts A."/>
            <person name="Utterback T."/>
            <person name="Fujii C.Y."/>
            <person name="Shea T.P."/>
            <person name="Creasy T.H."/>
            <person name="Haas B."/>
            <person name="Maiti R."/>
            <person name="Wu D."/>
            <person name="Peterson J."/>
            <person name="Van Aken S."/>
            <person name="Pai G."/>
            <person name="Militscher J."/>
            <person name="Sellers P."/>
            <person name="Gill J.E."/>
            <person name="Feldblyum T.V."/>
            <person name="Preuss D."/>
            <person name="Lin X."/>
            <person name="Nierman W.C."/>
            <person name="Salzberg S.L."/>
            <person name="White O."/>
            <person name="Venter J.C."/>
            <person name="Fraser C.M."/>
            <person name="Kaneko T."/>
            <person name="Nakamura Y."/>
            <person name="Sato S."/>
            <person name="Kato T."/>
            <person name="Asamizu E."/>
            <person name="Sasamoto S."/>
            <person name="Kimura T."/>
            <person name="Idesawa K."/>
            <person name="Kawashima K."/>
            <person name="Kishida Y."/>
            <person name="Kiyokawa C."/>
            <person name="Kohara M."/>
            <person name="Matsumoto M."/>
            <person name="Matsuno A."/>
            <person name="Muraki A."/>
            <person name="Nakayama S."/>
            <person name="Nakazaki N."/>
            <person name="Shinpo S."/>
            <person name="Takeuchi C."/>
            <person name="Wada T."/>
            <person name="Watanabe A."/>
            <person name="Yamada M."/>
            <person name="Yasuda M."/>
            <person name="Tabata S."/>
        </authorList>
    </citation>
    <scope>NUCLEOTIDE SEQUENCE [LARGE SCALE GENOMIC DNA]</scope>
    <source>
        <strain>cv. Columbia</strain>
    </source>
</reference>
<reference key="3">
    <citation type="journal article" date="2017" name="Plant J.">
        <title>Araport11: a complete reannotation of the Arabidopsis thaliana reference genome.</title>
        <authorList>
            <person name="Cheng C.Y."/>
            <person name="Krishnakumar V."/>
            <person name="Chan A.P."/>
            <person name="Thibaud-Nissen F."/>
            <person name="Schobel S."/>
            <person name="Town C.D."/>
        </authorList>
    </citation>
    <scope>GENOME REANNOTATION</scope>
    <source>
        <strain>cv. Columbia</strain>
    </source>
</reference>
<reference key="4">
    <citation type="journal article" date="2003" name="Science">
        <title>Empirical analysis of transcriptional activity in the Arabidopsis genome.</title>
        <authorList>
            <person name="Yamada K."/>
            <person name="Lim J."/>
            <person name="Dale J.M."/>
            <person name="Chen H."/>
            <person name="Shinn P."/>
            <person name="Palm C.J."/>
            <person name="Southwick A.M."/>
            <person name="Wu H.C."/>
            <person name="Kim C.J."/>
            <person name="Nguyen M."/>
            <person name="Pham P.K."/>
            <person name="Cheuk R.F."/>
            <person name="Karlin-Newmann G."/>
            <person name="Liu S.X."/>
            <person name="Lam B."/>
            <person name="Sakano H."/>
            <person name="Wu T."/>
            <person name="Yu G."/>
            <person name="Miranda M."/>
            <person name="Quach H.L."/>
            <person name="Tripp M."/>
            <person name="Chang C.H."/>
            <person name="Lee J.M."/>
            <person name="Toriumi M.J."/>
            <person name="Chan M.M."/>
            <person name="Tang C.C."/>
            <person name="Onodera C.S."/>
            <person name="Deng J.M."/>
            <person name="Akiyama K."/>
            <person name="Ansari Y."/>
            <person name="Arakawa T."/>
            <person name="Banh J."/>
            <person name="Banno F."/>
            <person name="Bowser L."/>
            <person name="Brooks S.Y."/>
            <person name="Carninci P."/>
            <person name="Chao Q."/>
            <person name="Choy N."/>
            <person name="Enju A."/>
            <person name="Goldsmith A.D."/>
            <person name="Gurjal M."/>
            <person name="Hansen N.F."/>
            <person name="Hayashizaki Y."/>
            <person name="Johnson-Hopson C."/>
            <person name="Hsuan V.W."/>
            <person name="Iida K."/>
            <person name="Karnes M."/>
            <person name="Khan S."/>
            <person name="Koesema E."/>
            <person name="Ishida J."/>
            <person name="Jiang P.X."/>
            <person name="Jones T."/>
            <person name="Kawai J."/>
            <person name="Kamiya A."/>
            <person name="Meyers C."/>
            <person name="Nakajima M."/>
            <person name="Narusaka M."/>
            <person name="Seki M."/>
            <person name="Sakurai T."/>
            <person name="Satou M."/>
            <person name="Tamse R."/>
            <person name="Vaysberg M."/>
            <person name="Wallender E.K."/>
            <person name="Wong C."/>
            <person name="Yamamura Y."/>
            <person name="Yuan S."/>
            <person name="Shinozaki K."/>
            <person name="Davis R.W."/>
            <person name="Theologis A."/>
            <person name="Ecker J.R."/>
        </authorList>
    </citation>
    <scope>NUCLEOTIDE SEQUENCE [LARGE SCALE MRNA]</scope>
    <source>
        <strain>cv. Columbia</strain>
    </source>
</reference>
<dbReference type="EC" id="4.2.2.2"/>
<dbReference type="EMBL" id="AF534079">
    <property type="protein sequence ID" value="AAM97687.1"/>
    <property type="molecule type" value="mRNA"/>
</dbReference>
<dbReference type="EMBL" id="AL049655">
    <property type="protein sequence ID" value="CAB41092.1"/>
    <property type="status" value="ALT_SEQ"/>
    <property type="molecule type" value="Genomic_DNA"/>
</dbReference>
<dbReference type="EMBL" id="CP002686">
    <property type="protein sequence ID" value="AEE79313.1"/>
    <property type="molecule type" value="Genomic_DNA"/>
</dbReference>
<dbReference type="EMBL" id="AY058870">
    <property type="protein sequence ID" value="AAL24257.1"/>
    <property type="molecule type" value="mRNA"/>
</dbReference>
<dbReference type="EMBL" id="AY074331">
    <property type="protein sequence ID" value="AAL67027.1"/>
    <property type="molecule type" value="mRNA"/>
</dbReference>
<dbReference type="EMBL" id="AY096739">
    <property type="protein sequence ID" value="AAM20373.1"/>
    <property type="molecule type" value="mRNA"/>
</dbReference>
<dbReference type="PIR" id="T06728">
    <property type="entry name" value="T06728"/>
</dbReference>
<dbReference type="RefSeq" id="NP_191052.2">
    <property type="nucleotide sequence ID" value="NM_115349.6"/>
</dbReference>
<dbReference type="SMR" id="Q93Z04"/>
<dbReference type="BioGRID" id="9973">
    <property type="interactions" value="3"/>
</dbReference>
<dbReference type="FunCoup" id="Q93Z04">
    <property type="interactions" value="112"/>
</dbReference>
<dbReference type="STRING" id="3702.Q93Z04"/>
<dbReference type="CAZy" id="PL1">
    <property type="family name" value="Polysaccharide Lyase Family 1"/>
</dbReference>
<dbReference type="GlyCosmos" id="Q93Z04">
    <property type="glycosylation" value="2 sites, No reported glycans"/>
</dbReference>
<dbReference type="GlyGen" id="Q93Z04">
    <property type="glycosylation" value="3 sites"/>
</dbReference>
<dbReference type="iPTMnet" id="Q93Z04"/>
<dbReference type="PaxDb" id="3702-AT3G54920.1"/>
<dbReference type="ProteomicsDB" id="234687"/>
<dbReference type="EnsemblPlants" id="AT3G54920.1">
    <property type="protein sequence ID" value="AT3G54920.1"/>
    <property type="gene ID" value="AT3G54920"/>
</dbReference>
<dbReference type="GeneID" id="824657"/>
<dbReference type="Gramene" id="AT3G54920.1">
    <property type="protein sequence ID" value="AT3G54920.1"/>
    <property type="gene ID" value="AT3G54920"/>
</dbReference>
<dbReference type="KEGG" id="ath:AT3G54920"/>
<dbReference type="Araport" id="AT3G54920"/>
<dbReference type="TAIR" id="AT3G54920">
    <property type="gene designation" value="PMR6"/>
</dbReference>
<dbReference type="eggNOG" id="ENOG502QPY9">
    <property type="taxonomic scope" value="Eukaryota"/>
</dbReference>
<dbReference type="HOGENOM" id="CLU_026608_0_0_1"/>
<dbReference type="InParanoid" id="Q93Z04"/>
<dbReference type="OMA" id="GEGMSSM"/>
<dbReference type="PhylomeDB" id="Q93Z04"/>
<dbReference type="BioCyc" id="ARA:AT3G54920-MONOMER"/>
<dbReference type="UniPathway" id="UPA00545">
    <property type="reaction ID" value="UER00824"/>
</dbReference>
<dbReference type="PRO" id="PR:Q93Z04"/>
<dbReference type="Proteomes" id="UP000006548">
    <property type="component" value="Chromosome 3"/>
</dbReference>
<dbReference type="ExpressionAtlas" id="Q93Z04">
    <property type="expression patterns" value="baseline and differential"/>
</dbReference>
<dbReference type="GO" id="GO:0005886">
    <property type="term" value="C:plasma membrane"/>
    <property type="evidence" value="ECO:0007669"/>
    <property type="project" value="UniProtKB-SubCell"/>
</dbReference>
<dbReference type="GO" id="GO:0098552">
    <property type="term" value="C:side of membrane"/>
    <property type="evidence" value="ECO:0007669"/>
    <property type="project" value="UniProtKB-KW"/>
</dbReference>
<dbReference type="GO" id="GO:0046872">
    <property type="term" value="F:metal ion binding"/>
    <property type="evidence" value="ECO:0007669"/>
    <property type="project" value="UniProtKB-KW"/>
</dbReference>
<dbReference type="GO" id="GO:0030570">
    <property type="term" value="F:pectate lyase activity"/>
    <property type="evidence" value="ECO:0000250"/>
    <property type="project" value="TAIR"/>
</dbReference>
<dbReference type="GO" id="GO:0042547">
    <property type="term" value="P:cell wall modification involved in multidimensional cell growth"/>
    <property type="evidence" value="ECO:0000315"/>
    <property type="project" value="TAIR"/>
</dbReference>
<dbReference type="GO" id="GO:0098542">
    <property type="term" value="P:defense response to other organism"/>
    <property type="evidence" value="ECO:0000315"/>
    <property type="project" value="TAIR"/>
</dbReference>
<dbReference type="GO" id="GO:0045490">
    <property type="term" value="P:pectin catabolic process"/>
    <property type="evidence" value="ECO:0007669"/>
    <property type="project" value="UniProtKB-UniPathway"/>
</dbReference>
<dbReference type="FunFam" id="2.160.20.10:FF:000009">
    <property type="entry name" value="Pectate lyase"/>
    <property type="match status" value="1"/>
</dbReference>
<dbReference type="Gene3D" id="2.160.20.10">
    <property type="entry name" value="Single-stranded right-handed beta-helix, Pectin lyase-like"/>
    <property type="match status" value="1"/>
</dbReference>
<dbReference type="InterPro" id="IPR018082">
    <property type="entry name" value="AmbAllergen"/>
</dbReference>
<dbReference type="InterPro" id="IPR002022">
    <property type="entry name" value="Pec_lyase"/>
</dbReference>
<dbReference type="InterPro" id="IPR012334">
    <property type="entry name" value="Pectin_lyas_fold"/>
</dbReference>
<dbReference type="InterPro" id="IPR011050">
    <property type="entry name" value="Pectin_lyase_fold/virulence"/>
</dbReference>
<dbReference type="InterPro" id="IPR045032">
    <property type="entry name" value="PEL"/>
</dbReference>
<dbReference type="PANTHER" id="PTHR31683:SF201">
    <property type="entry name" value="PECTATE LYASE 13-RELATED"/>
    <property type="match status" value="1"/>
</dbReference>
<dbReference type="PANTHER" id="PTHR31683">
    <property type="entry name" value="PECTATE LYASE 18-RELATED"/>
    <property type="match status" value="1"/>
</dbReference>
<dbReference type="Pfam" id="PF00544">
    <property type="entry name" value="Pectate_lyase_4"/>
    <property type="match status" value="1"/>
</dbReference>
<dbReference type="PRINTS" id="PR00807">
    <property type="entry name" value="AMBALLERGEN"/>
</dbReference>
<dbReference type="SMART" id="SM00656">
    <property type="entry name" value="Amb_all"/>
    <property type="match status" value="1"/>
</dbReference>
<dbReference type="SUPFAM" id="SSF51126">
    <property type="entry name" value="Pectin lyase-like"/>
    <property type="match status" value="1"/>
</dbReference>
<proteinExistence type="evidence at protein level"/>
<protein>
    <recommendedName>
        <fullName>Probable pectate lyase 13</fullName>
        <ecNumber>4.2.2.2</ecNumber>
    </recommendedName>
    <alternativeName>
        <fullName>Powdery mildew susceptibility protein</fullName>
    </alternativeName>
    <alternativeName>
        <fullName>Powdery mildew-resistant mutant 6</fullName>
    </alternativeName>
</protein>
<sequence>MLLQNFSNTIFLLCLFFTLLSATKPLNLTLPHQHPSPDSVALHVIRSVNESLARRQLSSPSSSSSSSSSSSSSSCRTGNPIDDCWRCSDADWSTNRQRLADCSIGFGHGTLGGKNGKIYVVTDSSDNNPTNPTPGTLRYGVIQEEPLWIVFSSNMLIRLKQELIINSYKTLDGRGSAVHITGNGCLTLQYVQHIIIHNLHIYDCKPSAGFEKRGRSDGDGISIFGSQKIWVDHCSMSHCTDGLIDAVMGSTAITISNNYFTHHDEVMLLGHDDNYAPDTGMQVTIAFNHFGQGLVQRMPRCRRGYIHVVNNDFTEWKMYAIGGSGNPTINSQGNRYSAPSDPSAKEVTKRVDSKDDGEWSNWNWRTEGDLMENGAFFVASGEGMSSMYSKASSVDPKAASLVDQLTRNAGVFGGPRDDQGQSGNSYSPYGGDGGGGGSSGGSSGGGMDVMGGTTRGSSSSSGDDSNVFQMIFGSDAPSRPRLTLLFSLLMISVLSLSTLLL</sequence>
<comment type="function">
    <text evidence="4">Susceptibility factor required for infection by most powdery mildews, but not by unrelated pathogens. Exact function not known, but clearly affects cell wall composition.</text>
</comment>
<comment type="catalytic activity">
    <reaction>
        <text>Eliminative cleavage of (1-&gt;4)-alpha-D-galacturonan to give oligosaccharides with 4-deoxy-alpha-D-galact-4-enuronosyl groups at their non-reducing ends.</text>
        <dbReference type="EC" id="4.2.2.2"/>
    </reaction>
</comment>
<comment type="cofactor">
    <cofactor evidence="1">
        <name>Ca(2+)</name>
        <dbReference type="ChEBI" id="CHEBI:29108"/>
    </cofactor>
    <text evidence="1">Binds 1 Ca(2+) ion. Required for its activity.</text>
</comment>
<comment type="pathway">
    <text>Glycan metabolism; pectin degradation; 2-dehydro-3-deoxy-D-gluconate from pectin: step 2/5.</text>
</comment>
<comment type="subcellular location">
    <subcellularLocation>
        <location evidence="5">Cell membrane</location>
        <topology evidence="5">Lipid-anchor</topology>
        <topology evidence="5">GPI-anchor</topology>
    </subcellularLocation>
</comment>
<comment type="tissue specificity">
    <text evidence="4">Expressed equally in mature leaves, buds, flowers, rosettes and roots.</text>
</comment>
<comment type="domain">
    <text>The C-terminal domain not found in other pectate lyase-like protein is required for PMR6 function since the pmr6-2 mutation confers resistance by introducing a frameshift in the mature mRNA which eliminates the C-terminal domain.</text>
</comment>
<comment type="miscellaneous">
    <text>Pmr6 mutations are pleiotropic, indicating that PMR6 plays a unique role in normal plant growth and development. The increased resistance in mutants is not mediated by the constitutive activation of the SA-dependent or the JA/ethylene-dependent defense pathway.</text>
</comment>
<comment type="similarity">
    <text evidence="5">Belongs to the polysaccharide lyase 1 family.</text>
</comment>
<comment type="sequence caution" evidence="5">
    <conflict type="erroneous gene model prediction">
        <sequence resource="EMBL-CDS" id="CAB41092"/>
    </conflict>
</comment>
<evidence type="ECO:0000250" key="1"/>
<evidence type="ECO:0000255" key="2"/>
<evidence type="ECO:0000256" key="3">
    <source>
        <dbReference type="SAM" id="MobiDB-lite"/>
    </source>
</evidence>
<evidence type="ECO:0000269" key="4">
    <source>
    </source>
</evidence>
<evidence type="ECO:0000305" key="5"/>
<feature type="signal peptide">
    <location>
        <begin position="1"/>
        <end position="22"/>
    </location>
</feature>
<feature type="chain" id="PRO_0000024877" description="Probable pectate lyase 13">
    <location>
        <begin position="23"/>
        <end position="474"/>
    </location>
</feature>
<feature type="propeptide" id="PRO_0000024878" description="Removed in mature form" evidence="2">
    <location>
        <begin position="475"/>
        <end position="501"/>
    </location>
</feature>
<feature type="region of interest" description="Disordered" evidence="3">
    <location>
        <begin position="55"/>
        <end position="78"/>
    </location>
</feature>
<feature type="region of interest" description="Disordered" evidence="3">
    <location>
        <begin position="329"/>
        <end position="359"/>
    </location>
</feature>
<feature type="region of interest" description="Disordered" evidence="3">
    <location>
        <begin position="408"/>
        <end position="463"/>
    </location>
</feature>
<feature type="compositionally biased region" description="Low complexity" evidence="3">
    <location>
        <begin position="58"/>
        <end position="74"/>
    </location>
</feature>
<feature type="compositionally biased region" description="Basic and acidic residues" evidence="3">
    <location>
        <begin position="343"/>
        <end position="357"/>
    </location>
</feature>
<feature type="compositionally biased region" description="Gly residues" evidence="3">
    <location>
        <begin position="430"/>
        <end position="449"/>
    </location>
</feature>
<feature type="compositionally biased region" description="Low complexity" evidence="3">
    <location>
        <begin position="450"/>
        <end position="463"/>
    </location>
</feature>
<feature type="active site" evidence="2">
    <location>
        <position position="297"/>
    </location>
</feature>
<feature type="binding site" evidence="1">
    <location>
        <position position="217"/>
    </location>
    <ligand>
        <name>Ca(2+)</name>
        <dbReference type="ChEBI" id="CHEBI:29108"/>
    </ligand>
</feature>
<feature type="binding site" evidence="1">
    <location>
        <position position="241"/>
    </location>
    <ligand>
        <name>Ca(2+)</name>
        <dbReference type="ChEBI" id="CHEBI:29108"/>
    </ligand>
</feature>
<feature type="binding site" evidence="1">
    <location>
        <position position="245"/>
    </location>
    <ligand>
        <name>Ca(2+)</name>
        <dbReference type="ChEBI" id="CHEBI:29108"/>
    </ligand>
</feature>
<feature type="lipid moiety-binding region" description="GPI-anchor amidated serine" evidence="2">
    <location>
        <position position="474"/>
    </location>
</feature>
<feature type="glycosylation site" description="N-linked (GlcNAc...) asparagine" evidence="2">
    <location>
        <position position="27"/>
    </location>
</feature>
<feature type="glycosylation site" description="N-linked (GlcNAc...) asparagine" evidence="2">
    <location>
        <position position="49"/>
    </location>
</feature>
<feature type="mutagenesis site" description="In pmr6-1; strong powdery mildew resistance, cell walls of plants are enriched for pectins with a lower degree of esterification and an alteration in the H bonding environment of cellulose microfibrils." evidence="4">
    <original>G</original>
    <variation>D</variation>
    <location>
        <position position="140"/>
    </location>
</feature>
<feature type="mutagenesis site" description="In pmr6-5; strong powdery mildew resistance, cell walls of plants are enriched for pectins with a lower degree of esterification and an alteration in the H bonding environment of cellulose microfibrils." evidence="4">
    <original>P</original>
    <variation>L</variation>
    <location>
        <position position="339"/>
    </location>
</feature>
<organism>
    <name type="scientific">Arabidopsis thaliana</name>
    <name type="common">Mouse-ear cress</name>
    <dbReference type="NCBI Taxonomy" id="3702"/>
    <lineage>
        <taxon>Eukaryota</taxon>
        <taxon>Viridiplantae</taxon>
        <taxon>Streptophyta</taxon>
        <taxon>Embryophyta</taxon>
        <taxon>Tracheophyta</taxon>
        <taxon>Spermatophyta</taxon>
        <taxon>Magnoliopsida</taxon>
        <taxon>eudicotyledons</taxon>
        <taxon>Gunneridae</taxon>
        <taxon>Pentapetalae</taxon>
        <taxon>rosids</taxon>
        <taxon>malvids</taxon>
        <taxon>Brassicales</taxon>
        <taxon>Brassicaceae</taxon>
        <taxon>Camelineae</taxon>
        <taxon>Arabidopsis</taxon>
    </lineage>
</organism>
<keyword id="KW-0106">Calcium</keyword>
<keyword id="KW-1003">Cell membrane</keyword>
<keyword id="KW-0325">Glycoprotein</keyword>
<keyword id="KW-0336">GPI-anchor</keyword>
<keyword id="KW-0449">Lipoprotein</keyword>
<keyword id="KW-0456">Lyase</keyword>
<keyword id="KW-0472">Membrane</keyword>
<keyword id="KW-0479">Metal-binding</keyword>
<keyword id="KW-1185">Reference proteome</keyword>
<keyword id="KW-0732">Signal</keyword>